<evidence type="ECO:0000250" key="1"/>
<evidence type="ECO:0000255" key="2">
    <source>
        <dbReference type="PROSITE-ProRule" id="PRU00808"/>
    </source>
</evidence>
<organism>
    <name type="scientific">Glycine max</name>
    <name type="common">Soybean</name>
    <name type="synonym">Glycine hispida</name>
    <dbReference type="NCBI Taxonomy" id="3847"/>
    <lineage>
        <taxon>Eukaryota</taxon>
        <taxon>Viridiplantae</taxon>
        <taxon>Streptophyta</taxon>
        <taxon>Embryophyta</taxon>
        <taxon>Tracheophyta</taxon>
        <taxon>Spermatophyta</taxon>
        <taxon>Magnoliopsida</taxon>
        <taxon>eudicotyledons</taxon>
        <taxon>Gunneridae</taxon>
        <taxon>Pentapetalae</taxon>
        <taxon>rosids</taxon>
        <taxon>fabids</taxon>
        <taxon>Fabales</taxon>
        <taxon>Fabaceae</taxon>
        <taxon>Papilionoideae</taxon>
        <taxon>50 kb inversion clade</taxon>
        <taxon>NPAAA clade</taxon>
        <taxon>indigoferoid/millettioid clade</taxon>
        <taxon>Phaseoleae</taxon>
        <taxon>Glycine</taxon>
        <taxon>Glycine subgen. Soja</taxon>
    </lineage>
</organism>
<keyword id="KW-0963">Cytoplasm</keyword>
<keyword id="KW-0539">Nucleus</keyword>
<keyword id="KW-0647">Proteasome</keyword>
<keyword id="KW-1185">Reference proteome</keyword>
<protein>
    <recommendedName>
        <fullName>Proteasome subunit alpha type-5</fullName>
    </recommendedName>
    <alternativeName>
        <fullName>20S proteasome alpha subunit E</fullName>
    </alternativeName>
    <alternativeName>
        <fullName>20S proteasome subunit alpha-5</fullName>
    </alternativeName>
</protein>
<accession>Q9M4T8</accession>
<reference key="1">
    <citation type="submission" date="2000-04" db="EMBL/GenBank/DDBJ databases">
        <title>Isolation of a cDNA encoding 20S proteasome subunit from soybean.</title>
        <authorList>
            <person name="Choi J."/>
            <person name="Bhoo S.H."/>
            <person name="Park P.B."/>
        </authorList>
    </citation>
    <scope>NUCLEOTIDE SEQUENCE [MRNA]</scope>
</reference>
<sequence>MFLTRTEYDRGVNTFSPEGRLFQVEYAIEAIKLGSTAIGLKTKEGVVLAVEKRITSPLLEPSSVEKIMEIDEHIGCAMSGLIADARTLVEHARVETQNHRFSYGEPMTVESTTQALCDLALRFGEGDEESMSRPFGVSLLIAGHDENGPSLYYTDPSGTFWQCNGKAIGSGSEGADSSLQEQFNKDLTLQEAETIALSILKQVMEEKVTPNNVDIAKVAPTYHLYTPSEVEAVISRL</sequence>
<name>PSA5_SOYBN</name>
<feature type="chain" id="PRO_0000124127" description="Proteasome subunit alpha type-5">
    <location>
        <begin position="1"/>
        <end position="237"/>
    </location>
</feature>
<proteinExistence type="evidence at transcript level"/>
<comment type="function">
    <text>The proteasome is a multicatalytic proteinase complex which is characterized by its ability to cleave peptides with Arg, Phe, Tyr, Leu, and Glu adjacent to the leaving group at neutral or slightly basic pH. The proteasome has an ATP-dependent proteolytic activity.</text>
</comment>
<comment type="subunit">
    <text evidence="1">The 26S proteasome consists of a 20S proteasome core and two 19S regulatory subunits. The 20S proteasome core is composed of 28 subunits that are arranged in four stacked rings, resulting in a barrel-shaped structure. The two end rings are each formed by seven alpha subunits, and the two central rings are each formed by seven beta subunits. The catalytic chamber with the active sites is on the inside of the barrel (By similarity).</text>
</comment>
<comment type="subcellular location">
    <subcellularLocation>
        <location evidence="1">Cytoplasm</location>
    </subcellularLocation>
    <subcellularLocation>
        <location evidence="1">Nucleus</location>
    </subcellularLocation>
</comment>
<comment type="similarity">
    <text evidence="2">Belongs to the peptidase T1A family.</text>
</comment>
<dbReference type="EMBL" id="AF255338">
    <property type="protein sequence ID" value="AAF70292.1"/>
    <property type="molecule type" value="mRNA"/>
</dbReference>
<dbReference type="RefSeq" id="NP_001235159.1">
    <property type="nucleotide sequence ID" value="NM_001248230.1"/>
</dbReference>
<dbReference type="SMR" id="Q9M4T8"/>
<dbReference type="FunCoup" id="Q9M4T8">
    <property type="interactions" value="7100"/>
</dbReference>
<dbReference type="STRING" id="3847.Q9M4T8"/>
<dbReference type="PaxDb" id="3847-GLYMA10G42650.1"/>
<dbReference type="ProMEX" id="Q9M4T8"/>
<dbReference type="GeneID" id="547598"/>
<dbReference type="KEGG" id="gmx:547598"/>
<dbReference type="eggNOG" id="KOG0176">
    <property type="taxonomic scope" value="Eukaryota"/>
</dbReference>
<dbReference type="InParanoid" id="Q9M4T8"/>
<dbReference type="OrthoDB" id="431557at2759"/>
<dbReference type="Proteomes" id="UP000008827">
    <property type="component" value="Unplaced"/>
</dbReference>
<dbReference type="GO" id="GO:0005737">
    <property type="term" value="C:cytoplasm"/>
    <property type="evidence" value="ECO:0007669"/>
    <property type="project" value="UniProtKB-SubCell"/>
</dbReference>
<dbReference type="GO" id="GO:0005634">
    <property type="term" value="C:nucleus"/>
    <property type="evidence" value="ECO:0000318"/>
    <property type="project" value="GO_Central"/>
</dbReference>
<dbReference type="GO" id="GO:0019773">
    <property type="term" value="C:proteasome core complex, alpha-subunit complex"/>
    <property type="evidence" value="ECO:0000250"/>
    <property type="project" value="UniProtKB"/>
</dbReference>
<dbReference type="GO" id="GO:0043161">
    <property type="term" value="P:proteasome-mediated ubiquitin-dependent protein catabolic process"/>
    <property type="evidence" value="ECO:0000318"/>
    <property type="project" value="GO_Central"/>
</dbReference>
<dbReference type="CDD" id="cd03753">
    <property type="entry name" value="proteasome_alpha_type_5"/>
    <property type="match status" value="1"/>
</dbReference>
<dbReference type="FunFam" id="3.60.20.10:FF:000029">
    <property type="entry name" value="Proteasome subunit alpha type"/>
    <property type="match status" value="1"/>
</dbReference>
<dbReference type="Gene3D" id="3.60.20.10">
    <property type="entry name" value="Glutamine Phosphoribosylpyrophosphate, subunit 1, domain 1"/>
    <property type="match status" value="1"/>
</dbReference>
<dbReference type="InterPro" id="IPR029055">
    <property type="entry name" value="Ntn_hydrolases_N"/>
</dbReference>
<dbReference type="InterPro" id="IPR050115">
    <property type="entry name" value="Proteasome_alpha"/>
</dbReference>
<dbReference type="InterPro" id="IPR023332">
    <property type="entry name" value="Proteasome_alpha-type"/>
</dbReference>
<dbReference type="InterPro" id="IPR033812">
    <property type="entry name" value="Proteasome_alpha_type_5"/>
</dbReference>
<dbReference type="InterPro" id="IPR000426">
    <property type="entry name" value="Proteasome_asu_N"/>
</dbReference>
<dbReference type="InterPro" id="IPR001353">
    <property type="entry name" value="Proteasome_sua/b"/>
</dbReference>
<dbReference type="NCBIfam" id="NF003075">
    <property type="entry name" value="PRK03996.1"/>
    <property type="match status" value="1"/>
</dbReference>
<dbReference type="PANTHER" id="PTHR11599">
    <property type="entry name" value="PROTEASOME SUBUNIT ALPHA/BETA"/>
    <property type="match status" value="1"/>
</dbReference>
<dbReference type="Pfam" id="PF00227">
    <property type="entry name" value="Proteasome"/>
    <property type="match status" value="1"/>
</dbReference>
<dbReference type="Pfam" id="PF10584">
    <property type="entry name" value="Proteasome_A_N"/>
    <property type="match status" value="1"/>
</dbReference>
<dbReference type="SMART" id="SM00948">
    <property type="entry name" value="Proteasome_A_N"/>
    <property type="match status" value="1"/>
</dbReference>
<dbReference type="SUPFAM" id="SSF56235">
    <property type="entry name" value="N-terminal nucleophile aminohydrolases (Ntn hydrolases)"/>
    <property type="match status" value="1"/>
</dbReference>
<dbReference type="PROSITE" id="PS00388">
    <property type="entry name" value="PROTEASOME_ALPHA_1"/>
    <property type="match status" value="1"/>
</dbReference>
<dbReference type="PROSITE" id="PS51475">
    <property type="entry name" value="PROTEASOME_ALPHA_2"/>
    <property type="match status" value="1"/>
</dbReference>
<gene>
    <name type="primary">PAE1</name>
</gene>